<gene>
    <name evidence="1" type="primary">mgsA</name>
    <name type="ordered locus">ACL_0403</name>
</gene>
<feature type="chain" id="PRO_1000081949" description="Methylglyoxal synthase">
    <location>
        <begin position="1"/>
        <end position="122"/>
    </location>
</feature>
<feature type="domain" description="MGS-like" evidence="1">
    <location>
        <begin position="1"/>
        <end position="122"/>
    </location>
</feature>
<feature type="active site" description="Proton donor/acceptor" evidence="1">
    <location>
        <position position="60"/>
    </location>
</feature>
<feature type="binding site" evidence="1">
    <location>
        <position position="8"/>
    </location>
    <ligand>
        <name>substrate</name>
    </ligand>
</feature>
<feature type="binding site" evidence="1">
    <location>
        <position position="12"/>
    </location>
    <ligand>
        <name>substrate</name>
    </ligand>
</feature>
<feature type="binding site" evidence="1">
    <location>
        <begin position="34"/>
        <end position="37"/>
    </location>
    <ligand>
        <name>substrate</name>
    </ligand>
</feature>
<feature type="binding site" evidence="1">
    <location>
        <begin position="54"/>
        <end position="55"/>
    </location>
    <ligand>
        <name>substrate</name>
    </ligand>
</feature>
<feature type="binding site" evidence="1">
    <location>
        <position position="87"/>
    </location>
    <ligand>
        <name>substrate</name>
    </ligand>
</feature>
<protein>
    <recommendedName>
        <fullName evidence="1">Methylglyoxal synthase</fullName>
        <shortName evidence="1">MGS</shortName>
        <ecNumber evidence="1">4.2.3.3</ecNumber>
    </recommendedName>
</protein>
<accession>A9NF94</accession>
<dbReference type="EC" id="4.2.3.3" evidence="1"/>
<dbReference type="EMBL" id="CP000896">
    <property type="protein sequence ID" value="ABX81024.1"/>
    <property type="molecule type" value="Genomic_DNA"/>
</dbReference>
<dbReference type="RefSeq" id="WP_012242355.1">
    <property type="nucleotide sequence ID" value="NC_010163.1"/>
</dbReference>
<dbReference type="SMR" id="A9NF94"/>
<dbReference type="STRING" id="441768.ACL_0403"/>
<dbReference type="GeneID" id="41338585"/>
<dbReference type="KEGG" id="acl:ACL_0403"/>
<dbReference type="eggNOG" id="COG1803">
    <property type="taxonomic scope" value="Bacteria"/>
</dbReference>
<dbReference type="HOGENOM" id="CLU_120420_1_0_14"/>
<dbReference type="OrthoDB" id="9787147at2"/>
<dbReference type="Proteomes" id="UP000008558">
    <property type="component" value="Chromosome"/>
</dbReference>
<dbReference type="GO" id="GO:0005829">
    <property type="term" value="C:cytosol"/>
    <property type="evidence" value="ECO:0007669"/>
    <property type="project" value="TreeGrafter"/>
</dbReference>
<dbReference type="GO" id="GO:0008929">
    <property type="term" value="F:methylglyoxal synthase activity"/>
    <property type="evidence" value="ECO:0007669"/>
    <property type="project" value="UniProtKB-UniRule"/>
</dbReference>
<dbReference type="GO" id="GO:0019242">
    <property type="term" value="P:methylglyoxal biosynthetic process"/>
    <property type="evidence" value="ECO:0007669"/>
    <property type="project" value="UniProtKB-UniRule"/>
</dbReference>
<dbReference type="CDD" id="cd01422">
    <property type="entry name" value="MGS"/>
    <property type="match status" value="1"/>
</dbReference>
<dbReference type="Gene3D" id="3.40.50.1380">
    <property type="entry name" value="Methylglyoxal synthase-like domain"/>
    <property type="match status" value="1"/>
</dbReference>
<dbReference type="HAMAP" id="MF_00549">
    <property type="entry name" value="Methylglyoxal_synth"/>
    <property type="match status" value="1"/>
</dbReference>
<dbReference type="InterPro" id="IPR004363">
    <property type="entry name" value="Methylgl_synth"/>
</dbReference>
<dbReference type="InterPro" id="IPR018148">
    <property type="entry name" value="Methylglyoxal_synth_AS"/>
</dbReference>
<dbReference type="InterPro" id="IPR011607">
    <property type="entry name" value="MGS-like_dom"/>
</dbReference>
<dbReference type="InterPro" id="IPR036914">
    <property type="entry name" value="MGS-like_dom_sf"/>
</dbReference>
<dbReference type="NCBIfam" id="TIGR00160">
    <property type="entry name" value="MGSA"/>
    <property type="match status" value="1"/>
</dbReference>
<dbReference type="NCBIfam" id="NF003559">
    <property type="entry name" value="PRK05234.1"/>
    <property type="match status" value="1"/>
</dbReference>
<dbReference type="PANTHER" id="PTHR30492">
    <property type="entry name" value="METHYLGLYOXAL SYNTHASE"/>
    <property type="match status" value="1"/>
</dbReference>
<dbReference type="PANTHER" id="PTHR30492:SF0">
    <property type="entry name" value="METHYLGLYOXAL SYNTHASE"/>
    <property type="match status" value="1"/>
</dbReference>
<dbReference type="Pfam" id="PF02142">
    <property type="entry name" value="MGS"/>
    <property type="match status" value="1"/>
</dbReference>
<dbReference type="PIRSF" id="PIRSF006614">
    <property type="entry name" value="Methylglyox_syn"/>
    <property type="match status" value="1"/>
</dbReference>
<dbReference type="SMART" id="SM00851">
    <property type="entry name" value="MGS"/>
    <property type="match status" value="1"/>
</dbReference>
<dbReference type="SUPFAM" id="SSF52335">
    <property type="entry name" value="Methylglyoxal synthase-like"/>
    <property type="match status" value="1"/>
</dbReference>
<dbReference type="PROSITE" id="PS01335">
    <property type="entry name" value="METHYLGLYOXAL_SYNTH"/>
    <property type="match status" value="1"/>
</dbReference>
<dbReference type="PROSITE" id="PS51855">
    <property type="entry name" value="MGS"/>
    <property type="match status" value="1"/>
</dbReference>
<proteinExistence type="inferred from homology"/>
<name>MGSA_ACHLI</name>
<keyword id="KW-0456">Lyase</keyword>
<keyword id="KW-1185">Reference proteome</keyword>
<comment type="function">
    <text evidence="1">Catalyzes the formation of methylglyoxal from dihydroxyacetone phosphate.</text>
</comment>
<comment type="catalytic activity">
    <reaction evidence="1">
        <text>dihydroxyacetone phosphate = methylglyoxal + phosphate</text>
        <dbReference type="Rhea" id="RHEA:17937"/>
        <dbReference type="ChEBI" id="CHEBI:17158"/>
        <dbReference type="ChEBI" id="CHEBI:43474"/>
        <dbReference type="ChEBI" id="CHEBI:57642"/>
        <dbReference type="EC" id="4.2.3.3"/>
    </reaction>
</comment>
<comment type="similarity">
    <text evidence="1">Belongs to the methylglyoxal synthase family.</text>
</comment>
<sequence>MRIALIAHDKKKDLMIQFTKDHEDYLSNHTLYATGTTGTRIMEHTKLKVNLKKSGPLGGDQEIGSMIANGKLDLVFFFRDPLTAQPHEPDVSALLRLCDVYDVPLATNNAAADLFIKHLKGK</sequence>
<organism>
    <name type="scientific">Acholeplasma laidlawii (strain PG-8A)</name>
    <dbReference type="NCBI Taxonomy" id="441768"/>
    <lineage>
        <taxon>Bacteria</taxon>
        <taxon>Bacillati</taxon>
        <taxon>Mycoplasmatota</taxon>
        <taxon>Mollicutes</taxon>
        <taxon>Acholeplasmatales</taxon>
        <taxon>Acholeplasmataceae</taxon>
        <taxon>Acholeplasma</taxon>
    </lineage>
</organism>
<reference key="1">
    <citation type="journal article" date="2011" name="J. Bacteriol.">
        <title>Complete genome and proteome of Acholeplasma laidlawii.</title>
        <authorList>
            <person name="Lazarev V.N."/>
            <person name="Levitskii S.A."/>
            <person name="Basovskii Y.I."/>
            <person name="Chukin M.M."/>
            <person name="Akopian T.A."/>
            <person name="Vereshchagin V.V."/>
            <person name="Kostrjukova E.S."/>
            <person name="Kovaleva G.Y."/>
            <person name="Kazanov M.D."/>
            <person name="Malko D.B."/>
            <person name="Vitreschak A.G."/>
            <person name="Sernova N.V."/>
            <person name="Gelfand M.S."/>
            <person name="Demina I.A."/>
            <person name="Serebryakova M.V."/>
            <person name="Galyamina M.A."/>
            <person name="Vtyurin N.N."/>
            <person name="Rogov S.I."/>
            <person name="Alexeev D.G."/>
            <person name="Ladygina V.G."/>
            <person name="Govorun V.M."/>
        </authorList>
    </citation>
    <scope>NUCLEOTIDE SEQUENCE [LARGE SCALE GENOMIC DNA]</scope>
    <source>
        <strain>PG-8A</strain>
    </source>
</reference>
<evidence type="ECO:0000255" key="1">
    <source>
        <dbReference type="HAMAP-Rule" id="MF_00549"/>
    </source>
</evidence>